<organism>
    <name type="scientific">Cupriavidus necator (strain ATCC 17699 / DSM 428 / KCTC 22496 / NCIMB 10442 / H16 / Stanier 337)</name>
    <name type="common">Ralstonia eutropha</name>
    <dbReference type="NCBI Taxonomy" id="381666"/>
    <lineage>
        <taxon>Bacteria</taxon>
        <taxon>Pseudomonadati</taxon>
        <taxon>Pseudomonadota</taxon>
        <taxon>Betaproteobacteria</taxon>
        <taxon>Burkholderiales</taxon>
        <taxon>Burkholderiaceae</taxon>
        <taxon>Cupriavidus</taxon>
    </lineage>
</organism>
<gene>
    <name evidence="1" type="primary">uppP</name>
    <name type="synonym">bacA</name>
    <name type="ordered locus">H16_A2871</name>
</gene>
<keyword id="KW-0046">Antibiotic resistance</keyword>
<keyword id="KW-0997">Cell inner membrane</keyword>
<keyword id="KW-1003">Cell membrane</keyword>
<keyword id="KW-0133">Cell shape</keyword>
<keyword id="KW-0961">Cell wall biogenesis/degradation</keyword>
<keyword id="KW-0378">Hydrolase</keyword>
<keyword id="KW-0472">Membrane</keyword>
<keyword id="KW-0573">Peptidoglycan synthesis</keyword>
<keyword id="KW-1185">Reference proteome</keyword>
<keyword id="KW-0812">Transmembrane</keyword>
<keyword id="KW-1133">Transmembrane helix</keyword>
<comment type="function">
    <text evidence="1">Catalyzes the dephosphorylation of undecaprenyl diphosphate (UPP). Confers resistance to bacitracin.</text>
</comment>
<comment type="catalytic activity">
    <reaction evidence="1">
        <text>di-trans,octa-cis-undecaprenyl diphosphate + H2O = di-trans,octa-cis-undecaprenyl phosphate + phosphate + H(+)</text>
        <dbReference type="Rhea" id="RHEA:28094"/>
        <dbReference type="ChEBI" id="CHEBI:15377"/>
        <dbReference type="ChEBI" id="CHEBI:15378"/>
        <dbReference type="ChEBI" id="CHEBI:43474"/>
        <dbReference type="ChEBI" id="CHEBI:58405"/>
        <dbReference type="ChEBI" id="CHEBI:60392"/>
        <dbReference type="EC" id="3.6.1.27"/>
    </reaction>
</comment>
<comment type="subcellular location">
    <subcellularLocation>
        <location evidence="1">Cell inner membrane</location>
        <topology evidence="1">Multi-pass membrane protein</topology>
    </subcellularLocation>
</comment>
<comment type="miscellaneous">
    <text>Bacitracin is thought to be involved in the inhibition of peptidoglycan synthesis by sequestering undecaprenyl diphosphate, thereby reducing the pool of lipid carrier available.</text>
</comment>
<comment type="similarity">
    <text evidence="1">Belongs to the UppP family.</text>
</comment>
<comment type="sequence caution" evidence="2">
    <conflict type="erroneous initiation">
        <sequence resource="EMBL-CDS" id="CAJ93947"/>
    </conflict>
</comment>
<accession>Q0K7S4</accession>
<sequence>MEIALALKAVILGIVEGLTEFLPISSTGHLILAGQLLDFNDEKGKIFEIVIQFGAILAVCWEFRARIGNVVRGLRAEPLAQRFAANVVIASVPAIVLAFIFGKWIKAHLFNPISVALAFIVGGVVILLAEWRDARRGTVSHPQGNALLEAAKAGAPRIESVDDLNWRDALKVGLAQCFALVPGTSRSGATIIGGMLFGLSRQVATEFSFFLAIPVIFGATVYELYKARALLNGDDLGIFAVGFVFAFLSAFLCVRWLLRFVATHDFKPFAWYRIAFGIVVLLTAYSGLVSWHA</sequence>
<evidence type="ECO:0000255" key="1">
    <source>
        <dbReference type="HAMAP-Rule" id="MF_01006"/>
    </source>
</evidence>
<evidence type="ECO:0000305" key="2"/>
<proteinExistence type="inferred from homology"/>
<name>UPPP_CUPNH</name>
<reference key="1">
    <citation type="journal article" date="2006" name="Nat. Biotechnol.">
        <title>Genome sequence of the bioplastic-producing 'Knallgas' bacterium Ralstonia eutropha H16.</title>
        <authorList>
            <person name="Pohlmann A."/>
            <person name="Fricke W.F."/>
            <person name="Reinecke F."/>
            <person name="Kusian B."/>
            <person name="Liesegang H."/>
            <person name="Cramm R."/>
            <person name="Eitinger T."/>
            <person name="Ewering C."/>
            <person name="Poetter M."/>
            <person name="Schwartz E."/>
            <person name="Strittmatter A."/>
            <person name="Voss I."/>
            <person name="Gottschalk G."/>
            <person name="Steinbuechel A."/>
            <person name="Friedrich B."/>
            <person name="Bowien B."/>
        </authorList>
    </citation>
    <scope>NUCLEOTIDE SEQUENCE [LARGE SCALE GENOMIC DNA]</scope>
    <source>
        <strain>ATCC 17699 / DSM 428 / KCTC 22496 / NCIMB 10442 / H16 / Stanier 337</strain>
    </source>
</reference>
<dbReference type="EC" id="3.6.1.27" evidence="1"/>
<dbReference type="EMBL" id="AM260479">
    <property type="protein sequence ID" value="CAJ93947.1"/>
    <property type="status" value="ALT_INIT"/>
    <property type="molecule type" value="Genomic_DNA"/>
</dbReference>
<dbReference type="RefSeq" id="WP_010813778.1">
    <property type="nucleotide sequence ID" value="NZ_CP039287.1"/>
</dbReference>
<dbReference type="SMR" id="Q0K7S4"/>
<dbReference type="STRING" id="381666.H16_A2871"/>
<dbReference type="KEGG" id="reh:H16_A2871"/>
<dbReference type="eggNOG" id="COG1968">
    <property type="taxonomic scope" value="Bacteria"/>
</dbReference>
<dbReference type="HOGENOM" id="CLU_060296_2_0_4"/>
<dbReference type="OrthoDB" id="9808289at2"/>
<dbReference type="Proteomes" id="UP000008210">
    <property type="component" value="Chromosome 1"/>
</dbReference>
<dbReference type="GO" id="GO:0005886">
    <property type="term" value="C:plasma membrane"/>
    <property type="evidence" value="ECO:0007669"/>
    <property type="project" value="UniProtKB-SubCell"/>
</dbReference>
<dbReference type="GO" id="GO:0050380">
    <property type="term" value="F:undecaprenyl-diphosphatase activity"/>
    <property type="evidence" value="ECO:0007669"/>
    <property type="project" value="UniProtKB-UniRule"/>
</dbReference>
<dbReference type="GO" id="GO:0071555">
    <property type="term" value="P:cell wall organization"/>
    <property type="evidence" value="ECO:0007669"/>
    <property type="project" value="UniProtKB-KW"/>
</dbReference>
<dbReference type="GO" id="GO:0009252">
    <property type="term" value="P:peptidoglycan biosynthetic process"/>
    <property type="evidence" value="ECO:0007669"/>
    <property type="project" value="UniProtKB-KW"/>
</dbReference>
<dbReference type="GO" id="GO:0008360">
    <property type="term" value="P:regulation of cell shape"/>
    <property type="evidence" value="ECO:0007669"/>
    <property type="project" value="UniProtKB-KW"/>
</dbReference>
<dbReference type="GO" id="GO:0046677">
    <property type="term" value="P:response to antibiotic"/>
    <property type="evidence" value="ECO:0007669"/>
    <property type="project" value="UniProtKB-UniRule"/>
</dbReference>
<dbReference type="HAMAP" id="MF_01006">
    <property type="entry name" value="Undec_diphosphatase"/>
    <property type="match status" value="1"/>
</dbReference>
<dbReference type="InterPro" id="IPR003824">
    <property type="entry name" value="UppP"/>
</dbReference>
<dbReference type="NCBIfam" id="NF001389">
    <property type="entry name" value="PRK00281.1-2"/>
    <property type="match status" value="1"/>
</dbReference>
<dbReference type="NCBIfam" id="NF001390">
    <property type="entry name" value="PRK00281.1-4"/>
    <property type="match status" value="1"/>
</dbReference>
<dbReference type="PANTHER" id="PTHR30622">
    <property type="entry name" value="UNDECAPRENYL-DIPHOSPHATASE"/>
    <property type="match status" value="1"/>
</dbReference>
<dbReference type="PANTHER" id="PTHR30622:SF3">
    <property type="entry name" value="UNDECAPRENYL-DIPHOSPHATASE"/>
    <property type="match status" value="1"/>
</dbReference>
<dbReference type="Pfam" id="PF02673">
    <property type="entry name" value="BacA"/>
    <property type="match status" value="1"/>
</dbReference>
<protein>
    <recommendedName>
        <fullName evidence="1">Undecaprenyl-diphosphatase</fullName>
        <ecNumber evidence="1">3.6.1.27</ecNumber>
    </recommendedName>
    <alternativeName>
        <fullName evidence="1">Bacitracin resistance protein</fullName>
    </alternativeName>
    <alternativeName>
        <fullName evidence="1">Undecaprenyl pyrophosphate phosphatase</fullName>
    </alternativeName>
</protein>
<feature type="chain" id="PRO_0000290754" description="Undecaprenyl-diphosphatase">
    <location>
        <begin position="1"/>
        <end position="293"/>
    </location>
</feature>
<feature type="transmembrane region" description="Helical" evidence="1">
    <location>
        <begin position="3"/>
        <end position="23"/>
    </location>
</feature>
<feature type="transmembrane region" description="Helical" evidence="1">
    <location>
        <begin position="43"/>
        <end position="63"/>
    </location>
</feature>
<feature type="transmembrane region" description="Helical" evidence="1">
    <location>
        <begin position="85"/>
        <end position="105"/>
    </location>
</feature>
<feature type="transmembrane region" description="Helical" evidence="1">
    <location>
        <begin position="109"/>
        <end position="129"/>
    </location>
</feature>
<feature type="transmembrane region" description="Helical" evidence="1">
    <location>
        <begin position="178"/>
        <end position="198"/>
    </location>
</feature>
<feature type="transmembrane region" description="Helical" evidence="1">
    <location>
        <begin position="203"/>
        <end position="223"/>
    </location>
</feature>
<feature type="transmembrane region" description="Helical" evidence="1">
    <location>
        <begin position="238"/>
        <end position="258"/>
    </location>
</feature>
<feature type="transmembrane region" description="Helical" evidence="1">
    <location>
        <begin position="269"/>
        <end position="289"/>
    </location>
</feature>